<sequence>MPTKIEARLKRKNRIRKKLSGTTERPRLTVYKSLKHIYAQVVDDTTGKTLAFASSLSKDLKGQDEGDKKADAKRVGALIAQKCKAANVEAVVFDRNGFPYHGRIAAVADAAREAGLKF</sequence>
<evidence type="ECO:0000255" key="1">
    <source>
        <dbReference type="HAMAP-Rule" id="MF_01337"/>
    </source>
</evidence>
<evidence type="ECO:0000305" key="2"/>
<proteinExistence type="inferred from homology"/>
<feature type="chain" id="PRO_0000251333" description="Large ribosomal subunit protein uL18">
    <location>
        <begin position="1"/>
        <end position="118"/>
    </location>
</feature>
<dbReference type="EMBL" id="CP000113">
    <property type="protein sequence ID" value="ABF88209.1"/>
    <property type="status" value="ALT_INIT"/>
    <property type="molecule type" value="Genomic_DNA"/>
</dbReference>
<dbReference type="RefSeq" id="WP_026114014.1">
    <property type="nucleotide sequence ID" value="NC_008095.1"/>
</dbReference>
<dbReference type="SMR" id="Q1D759"/>
<dbReference type="STRING" id="246197.MXAN_3315"/>
<dbReference type="EnsemblBacteria" id="ABF88209">
    <property type="protein sequence ID" value="ABF88209"/>
    <property type="gene ID" value="MXAN_3315"/>
</dbReference>
<dbReference type="GeneID" id="41360668"/>
<dbReference type="KEGG" id="mxa:MXAN_3315"/>
<dbReference type="eggNOG" id="COG0256">
    <property type="taxonomic scope" value="Bacteria"/>
</dbReference>
<dbReference type="HOGENOM" id="CLU_098841_0_1_7"/>
<dbReference type="OrthoDB" id="9810939at2"/>
<dbReference type="Proteomes" id="UP000002402">
    <property type="component" value="Chromosome"/>
</dbReference>
<dbReference type="GO" id="GO:0022625">
    <property type="term" value="C:cytosolic large ribosomal subunit"/>
    <property type="evidence" value="ECO:0007669"/>
    <property type="project" value="TreeGrafter"/>
</dbReference>
<dbReference type="GO" id="GO:0008097">
    <property type="term" value="F:5S rRNA binding"/>
    <property type="evidence" value="ECO:0007669"/>
    <property type="project" value="TreeGrafter"/>
</dbReference>
<dbReference type="GO" id="GO:0003735">
    <property type="term" value="F:structural constituent of ribosome"/>
    <property type="evidence" value="ECO:0007669"/>
    <property type="project" value="InterPro"/>
</dbReference>
<dbReference type="GO" id="GO:0006412">
    <property type="term" value="P:translation"/>
    <property type="evidence" value="ECO:0007669"/>
    <property type="project" value="UniProtKB-UniRule"/>
</dbReference>
<dbReference type="CDD" id="cd00432">
    <property type="entry name" value="Ribosomal_L18_L5e"/>
    <property type="match status" value="1"/>
</dbReference>
<dbReference type="FunFam" id="3.30.420.100:FF:000001">
    <property type="entry name" value="50S ribosomal protein L18"/>
    <property type="match status" value="1"/>
</dbReference>
<dbReference type="Gene3D" id="3.30.420.100">
    <property type="match status" value="1"/>
</dbReference>
<dbReference type="HAMAP" id="MF_01337_B">
    <property type="entry name" value="Ribosomal_uL18_B"/>
    <property type="match status" value="1"/>
</dbReference>
<dbReference type="InterPro" id="IPR004389">
    <property type="entry name" value="Ribosomal_uL18_bac-type"/>
</dbReference>
<dbReference type="InterPro" id="IPR005484">
    <property type="entry name" value="Ribosomal_uL18_bac/euk"/>
</dbReference>
<dbReference type="NCBIfam" id="TIGR00060">
    <property type="entry name" value="L18_bact"/>
    <property type="match status" value="1"/>
</dbReference>
<dbReference type="PANTHER" id="PTHR12899">
    <property type="entry name" value="39S RIBOSOMAL PROTEIN L18, MITOCHONDRIAL"/>
    <property type="match status" value="1"/>
</dbReference>
<dbReference type="PANTHER" id="PTHR12899:SF3">
    <property type="entry name" value="LARGE RIBOSOMAL SUBUNIT PROTEIN UL18M"/>
    <property type="match status" value="1"/>
</dbReference>
<dbReference type="Pfam" id="PF00861">
    <property type="entry name" value="Ribosomal_L18p"/>
    <property type="match status" value="1"/>
</dbReference>
<dbReference type="SUPFAM" id="SSF53137">
    <property type="entry name" value="Translational machinery components"/>
    <property type="match status" value="1"/>
</dbReference>
<organism>
    <name type="scientific">Myxococcus xanthus (strain DK1622)</name>
    <dbReference type="NCBI Taxonomy" id="246197"/>
    <lineage>
        <taxon>Bacteria</taxon>
        <taxon>Pseudomonadati</taxon>
        <taxon>Myxococcota</taxon>
        <taxon>Myxococcia</taxon>
        <taxon>Myxococcales</taxon>
        <taxon>Cystobacterineae</taxon>
        <taxon>Myxococcaceae</taxon>
        <taxon>Myxococcus</taxon>
    </lineage>
</organism>
<reference key="1">
    <citation type="journal article" date="2006" name="Proc. Natl. Acad. Sci. U.S.A.">
        <title>Evolution of sensory complexity recorded in a myxobacterial genome.</title>
        <authorList>
            <person name="Goldman B.S."/>
            <person name="Nierman W.C."/>
            <person name="Kaiser D."/>
            <person name="Slater S.C."/>
            <person name="Durkin A.S."/>
            <person name="Eisen J.A."/>
            <person name="Ronning C.M."/>
            <person name="Barbazuk W.B."/>
            <person name="Blanchard M."/>
            <person name="Field C."/>
            <person name="Halling C."/>
            <person name="Hinkle G."/>
            <person name="Iartchuk O."/>
            <person name="Kim H.S."/>
            <person name="Mackenzie C."/>
            <person name="Madupu R."/>
            <person name="Miller N."/>
            <person name="Shvartsbeyn A."/>
            <person name="Sullivan S.A."/>
            <person name="Vaudin M."/>
            <person name="Wiegand R."/>
            <person name="Kaplan H.B."/>
        </authorList>
    </citation>
    <scope>NUCLEOTIDE SEQUENCE [LARGE SCALE GENOMIC DNA]</scope>
    <source>
        <strain>DK1622</strain>
    </source>
</reference>
<comment type="function">
    <text evidence="1">This is one of the proteins that bind and probably mediate the attachment of the 5S RNA into the large ribosomal subunit, where it forms part of the central protuberance.</text>
</comment>
<comment type="subunit">
    <text evidence="1">Part of the 50S ribosomal subunit; part of the 5S rRNA/L5/L18/L25 subcomplex. Contacts the 5S and 23S rRNAs.</text>
</comment>
<comment type="similarity">
    <text evidence="1">Belongs to the universal ribosomal protein uL18 family.</text>
</comment>
<comment type="sequence caution" evidence="2">
    <conflict type="erroneous initiation">
        <sequence resource="EMBL-CDS" id="ABF88209"/>
    </conflict>
</comment>
<protein>
    <recommendedName>
        <fullName evidence="1">Large ribosomal subunit protein uL18</fullName>
    </recommendedName>
    <alternativeName>
        <fullName evidence="2">50S ribosomal protein L18</fullName>
    </alternativeName>
</protein>
<accession>Q1D759</accession>
<keyword id="KW-1185">Reference proteome</keyword>
<keyword id="KW-0687">Ribonucleoprotein</keyword>
<keyword id="KW-0689">Ribosomal protein</keyword>
<keyword id="KW-0694">RNA-binding</keyword>
<keyword id="KW-0699">rRNA-binding</keyword>
<name>RL18_MYXXD</name>
<gene>
    <name evidence="1" type="primary">rplR</name>
    <name type="ordered locus">MXAN_3315</name>
</gene>